<gene>
    <name evidence="1" type="primary">pdaD</name>
    <name type="ordered locus">MmarC6_1088</name>
</gene>
<dbReference type="EC" id="4.1.1.19" evidence="1"/>
<dbReference type="EMBL" id="CP000867">
    <property type="protein sequence ID" value="ABX01902.1"/>
    <property type="molecule type" value="Genomic_DNA"/>
</dbReference>
<dbReference type="SMR" id="A9A979"/>
<dbReference type="STRING" id="444158.MmarC6_1088"/>
<dbReference type="KEGG" id="mmx:MmarC6_1088"/>
<dbReference type="eggNOG" id="arCOG04490">
    <property type="taxonomic scope" value="Archaea"/>
</dbReference>
<dbReference type="HOGENOM" id="CLU_114389_2_0_2"/>
<dbReference type="OrthoDB" id="30748at2157"/>
<dbReference type="PhylomeDB" id="A9A979"/>
<dbReference type="GO" id="GO:0008792">
    <property type="term" value="F:arginine decarboxylase activity"/>
    <property type="evidence" value="ECO:0007669"/>
    <property type="project" value="UniProtKB-UniRule"/>
</dbReference>
<dbReference type="GO" id="GO:0006527">
    <property type="term" value="P:arginine catabolic process"/>
    <property type="evidence" value="ECO:0007669"/>
    <property type="project" value="InterPro"/>
</dbReference>
<dbReference type="Gene3D" id="3.30.60.30">
    <property type="match status" value="1"/>
</dbReference>
<dbReference type="Gene3D" id="3.50.20.10">
    <property type="entry name" value="Pyruvoyl-Dependent Histidine Decarboxylase, subunit B"/>
    <property type="match status" value="1"/>
</dbReference>
<dbReference type="HAMAP" id="MF_01404">
    <property type="entry name" value="PvlArgDC"/>
    <property type="match status" value="1"/>
</dbReference>
<dbReference type="InterPro" id="IPR016104">
    <property type="entry name" value="Pyr-dep_his/arg-deCO2ase"/>
</dbReference>
<dbReference type="InterPro" id="IPR016105">
    <property type="entry name" value="Pyr-dep_his/arg-deCO2ase_sand"/>
</dbReference>
<dbReference type="InterPro" id="IPR002724">
    <property type="entry name" value="Pyruvoyl-dep_arg_deCO2ase"/>
</dbReference>
<dbReference type="NCBIfam" id="TIGR00286">
    <property type="entry name" value="pyruvoyl-dependent arginine decarboxylase"/>
    <property type="match status" value="1"/>
</dbReference>
<dbReference type="PANTHER" id="PTHR40438">
    <property type="entry name" value="PYRUVOYL-DEPENDENT ARGININE DECARBOXYLASE"/>
    <property type="match status" value="1"/>
</dbReference>
<dbReference type="PANTHER" id="PTHR40438:SF1">
    <property type="entry name" value="PYRUVOYL-DEPENDENT ARGININE DECARBOXYLASE"/>
    <property type="match status" value="1"/>
</dbReference>
<dbReference type="Pfam" id="PF01862">
    <property type="entry name" value="PvlArgDC"/>
    <property type="match status" value="1"/>
</dbReference>
<dbReference type="PIRSF" id="PIRSF005216">
    <property type="entry name" value="Pyruvoyl-dep_arg_deCO2ase"/>
    <property type="match status" value="1"/>
</dbReference>
<dbReference type="SFLD" id="SFLDF00471">
    <property type="entry name" value="Pyruvoyl-dependent_arginine_de"/>
    <property type="match status" value="1"/>
</dbReference>
<dbReference type="SFLD" id="SFLDG01170">
    <property type="entry name" value="Pyruvoyl-dependent_arginine_de"/>
    <property type="match status" value="1"/>
</dbReference>
<dbReference type="SFLD" id="SFLDS00055">
    <property type="entry name" value="Pyruvoyl-Dependent_Histidine/A"/>
    <property type="match status" value="1"/>
</dbReference>
<dbReference type="SUPFAM" id="SSF56271">
    <property type="entry name" value="Pyruvoyl-dependent histidine and arginine decarboxylases"/>
    <property type="match status" value="1"/>
</dbReference>
<protein>
    <recommendedName>
        <fullName evidence="1">Pyruvoyl-dependent arginine decarboxylase</fullName>
        <shortName evidence="1">PvlArgDC</shortName>
        <ecNumber evidence="1">4.1.1.19</ecNumber>
    </recommendedName>
    <component>
        <recommendedName>
            <fullName evidence="1">Pyruvoyl-dependent arginine decarboxylase subunit beta</fullName>
        </recommendedName>
    </component>
    <component>
        <recommendedName>
            <fullName evidence="1">Pyruvoyl-dependent arginine decarboxylase subunit alpha</fullName>
        </recommendedName>
    </component>
</protein>
<comment type="catalytic activity">
    <reaction evidence="1">
        <text>L-arginine + H(+) = agmatine + CO2</text>
        <dbReference type="Rhea" id="RHEA:17641"/>
        <dbReference type="ChEBI" id="CHEBI:15378"/>
        <dbReference type="ChEBI" id="CHEBI:16526"/>
        <dbReference type="ChEBI" id="CHEBI:32682"/>
        <dbReference type="ChEBI" id="CHEBI:58145"/>
        <dbReference type="EC" id="4.1.1.19"/>
    </reaction>
</comment>
<comment type="cofactor">
    <cofactor evidence="1">
        <name>pyruvate</name>
        <dbReference type="ChEBI" id="CHEBI:15361"/>
    </cofactor>
    <text evidence="1">Binds 1 pyruvoyl group covalently per subunit.</text>
</comment>
<comment type="similarity">
    <text evidence="1">Belongs to the PdaD family.</text>
</comment>
<proteinExistence type="inferred from homology"/>
<accession>A9A979</accession>
<keyword id="KW-0210">Decarboxylase</keyword>
<keyword id="KW-0456">Lyase</keyword>
<keyword id="KW-0670">Pyruvate</keyword>
<reference key="1">
    <citation type="submission" date="2007-10" db="EMBL/GenBank/DDBJ databases">
        <title>Complete sequence of Methanococcus maripaludis C6.</title>
        <authorList>
            <consortium name="US DOE Joint Genome Institute"/>
            <person name="Copeland A."/>
            <person name="Lucas S."/>
            <person name="Lapidus A."/>
            <person name="Barry K."/>
            <person name="Glavina del Rio T."/>
            <person name="Dalin E."/>
            <person name="Tice H."/>
            <person name="Pitluck S."/>
            <person name="Clum A."/>
            <person name="Schmutz J."/>
            <person name="Larimer F."/>
            <person name="Land M."/>
            <person name="Hauser L."/>
            <person name="Kyrpides N."/>
            <person name="Mikhailova N."/>
            <person name="Sieprawska-Lupa M."/>
            <person name="Whitman W.B."/>
            <person name="Richardson P."/>
        </authorList>
    </citation>
    <scope>NUCLEOTIDE SEQUENCE [LARGE SCALE GENOMIC DNA]</scope>
    <source>
        <strain>C6 / ATCC BAA-1332</strain>
    </source>
</reference>
<feature type="chain" id="PRO_1000145470" description="Pyruvoyl-dependent arginine decarboxylase subunit beta" evidence="1">
    <location>
        <begin position="1"/>
        <end position="51"/>
    </location>
</feature>
<feature type="chain" id="PRO_1000145471" description="Pyruvoyl-dependent arginine decarboxylase subunit alpha" evidence="1">
    <location>
        <begin position="52"/>
        <end position="164"/>
    </location>
</feature>
<feature type="site" description="Cleavage (non-hydrolytic)" evidence="1">
    <location>
        <begin position="51"/>
        <end position="52"/>
    </location>
</feature>
<feature type="modified residue" description="Pyruvic acid (Ser)" evidence="1">
    <location>
        <position position="52"/>
    </location>
</feature>
<sequence length="164" mass="17631">MMKTSAIHSPFEAPNTISLVAGTGDAKNPLNAFDMSLLESGIGNLNLIRISSIMPPKADIIPLPKIPQGSLVPTAYGYQISELKGETVAAGISVAIPKDKELCGLIMEYECIGGKKECEDTVRNMAKEGFEMRGWEIDEIISIASEHTVENIGCAFAAAALWYK</sequence>
<organism>
    <name type="scientific">Methanococcus maripaludis (strain C6 / ATCC BAA-1332)</name>
    <dbReference type="NCBI Taxonomy" id="444158"/>
    <lineage>
        <taxon>Archaea</taxon>
        <taxon>Methanobacteriati</taxon>
        <taxon>Methanobacteriota</taxon>
        <taxon>Methanomada group</taxon>
        <taxon>Methanococci</taxon>
        <taxon>Methanococcales</taxon>
        <taxon>Methanococcaceae</taxon>
        <taxon>Methanococcus</taxon>
    </lineage>
</organism>
<name>PDAD_METM6</name>
<evidence type="ECO:0000255" key="1">
    <source>
        <dbReference type="HAMAP-Rule" id="MF_01404"/>
    </source>
</evidence>